<feature type="chain" id="PRO_0000157766" description="Probable GTP-binding protein EngB">
    <location>
        <begin position="1"/>
        <end position="209"/>
    </location>
</feature>
<feature type="domain" description="EngB-type G" evidence="1">
    <location>
        <begin position="22"/>
        <end position="198"/>
    </location>
</feature>
<feature type="binding site" evidence="1">
    <location>
        <position position="37"/>
    </location>
    <ligand>
        <name>Mg(2+)</name>
        <dbReference type="ChEBI" id="CHEBI:18420"/>
    </ligand>
</feature>
<feature type="binding site" evidence="1">
    <location>
        <position position="59"/>
    </location>
    <ligand>
        <name>Mg(2+)</name>
        <dbReference type="ChEBI" id="CHEBI:18420"/>
    </ligand>
</feature>
<organism>
    <name type="scientific">Neisseria gonorrhoeae</name>
    <dbReference type="NCBI Taxonomy" id="485"/>
    <lineage>
        <taxon>Bacteria</taxon>
        <taxon>Pseudomonadati</taxon>
        <taxon>Pseudomonadota</taxon>
        <taxon>Betaproteobacteria</taxon>
        <taxon>Neisseriales</taxon>
        <taxon>Neisseriaceae</taxon>
        <taxon>Neisseria</taxon>
    </lineage>
</organism>
<dbReference type="EMBL" id="U72876">
    <property type="protein sequence ID" value="AAB52537.1"/>
    <property type="status" value="ALT_INIT"/>
    <property type="molecule type" value="Genomic_DNA"/>
</dbReference>
<dbReference type="SMR" id="O05132"/>
<dbReference type="GO" id="GO:0005829">
    <property type="term" value="C:cytosol"/>
    <property type="evidence" value="ECO:0007669"/>
    <property type="project" value="TreeGrafter"/>
</dbReference>
<dbReference type="GO" id="GO:0005525">
    <property type="term" value="F:GTP binding"/>
    <property type="evidence" value="ECO:0007669"/>
    <property type="project" value="UniProtKB-UniRule"/>
</dbReference>
<dbReference type="GO" id="GO:0046872">
    <property type="term" value="F:metal ion binding"/>
    <property type="evidence" value="ECO:0007669"/>
    <property type="project" value="UniProtKB-KW"/>
</dbReference>
<dbReference type="GO" id="GO:0000917">
    <property type="term" value="P:division septum assembly"/>
    <property type="evidence" value="ECO:0007669"/>
    <property type="project" value="UniProtKB-KW"/>
</dbReference>
<dbReference type="CDD" id="cd01876">
    <property type="entry name" value="YihA_EngB"/>
    <property type="match status" value="1"/>
</dbReference>
<dbReference type="FunFam" id="3.40.50.300:FF:000098">
    <property type="entry name" value="Probable GTP-binding protein EngB"/>
    <property type="match status" value="1"/>
</dbReference>
<dbReference type="Gene3D" id="3.40.50.300">
    <property type="entry name" value="P-loop containing nucleotide triphosphate hydrolases"/>
    <property type="match status" value="1"/>
</dbReference>
<dbReference type="HAMAP" id="MF_00321">
    <property type="entry name" value="GTPase_EngB"/>
    <property type="match status" value="1"/>
</dbReference>
<dbReference type="InterPro" id="IPR030393">
    <property type="entry name" value="G_ENGB_dom"/>
</dbReference>
<dbReference type="InterPro" id="IPR006073">
    <property type="entry name" value="GTP-bd"/>
</dbReference>
<dbReference type="InterPro" id="IPR019987">
    <property type="entry name" value="GTP-bd_ribosome_bio_YsxC"/>
</dbReference>
<dbReference type="InterPro" id="IPR027417">
    <property type="entry name" value="P-loop_NTPase"/>
</dbReference>
<dbReference type="NCBIfam" id="TIGR03598">
    <property type="entry name" value="GTPase_YsxC"/>
    <property type="match status" value="1"/>
</dbReference>
<dbReference type="PANTHER" id="PTHR11649:SF13">
    <property type="entry name" value="ENGB-TYPE G DOMAIN-CONTAINING PROTEIN"/>
    <property type="match status" value="1"/>
</dbReference>
<dbReference type="PANTHER" id="PTHR11649">
    <property type="entry name" value="MSS1/TRME-RELATED GTP-BINDING PROTEIN"/>
    <property type="match status" value="1"/>
</dbReference>
<dbReference type="Pfam" id="PF01926">
    <property type="entry name" value="MMR_HSR1"/>
    <property type="match status" value="1"/>
</dbReference>
<dbReference type="SUPFAM" id="SSF52540">
    <property type="entry name" value="P-loop containing nucleoside triphosphate hydrolases"/>
    <property type="match status" value="1"/>
</dbReference>
<dbReference type="PROSITE" id="PS51706">
    <property type="entry name" value="G_ENGB"/>
    <property type="match status" value="1"/>
</dbReference>
<accession>O05132</accession>
<keyword id="KW-0131">Cell cycle</keyword>
<keyword id="KW-0132">Cell division</keyword>
<keyword id="KW-0342">GTP-binding</keyword>
<keyword id="KW-0460">Magnesium</keyword>
<keyword id="KW-0479">Metal-binding</keyword>
<keyword id="KW-0547">Nucleotide-binding</keyword>
<keyword id="KW-0717">Septation</keyword>
<evidence type="ECO:0000255" key="1">
    <source>
        <dbReference type="HAMAP-Rule" id="MF_00321"/>
    </source>
</evidence>
<evidence type="ECO:0000305" key="2"/>
<sequence>MNLFQNAKFFTTVNHLKDLPDTPLEIAFVGRSNAGKSSAINTLTNHVRLAYVSKTPGRTQHINFFELQNGNFMVDLPGYGYAQVPEAVRAHWVNLLGDYLRHRKELIGLVLIMDARHPLKELDIRMLDFFHTTGRPVHILLSKADKLSKNEQIKTLSQVKKLLKPYSDRQNISVQLFSSLKKQGIDEANRTVGSWFDAADAAASSPEEN</sequence>
<gene>
    <name evidence="1" type="primary">engB</name>
</gene>
<proteinExistence type="inferred from homology"/>
<protein>
    <recommendedName>
        <fullName evidence="1">Probable GTP-binding protein EngB</fullName>
    </recommendedName>
</protein>
<name>ENGB_NEIGO</name>
<comment type="function">
    <text evidence="1">Necessary for normal cell division and for the maintenance of normal septation.</text>
</comment>
<comment type="cofactor">
    <cofactor evidence="1">
        <name>Mg(2+)</name>
        <dbReference type="ChEBI" id="CHEBI:18420"/>
    </cofactor>
</comment>
<comment type="similarity">
    <text evidence="1">Belongs to the TRAFAC class TrmE-Era-EngA-EngB-Septin-like GTPase superfamily. EngB GTPase family.</text>
</comment>
<comment type="sequence caution" evidence="2">
    <conflict type="erroneous initiation">
        <sequence resource="EMBL-CDS" id="AAB52537"/>
    </conflict>
</comment>
<reference key="1">
    <citation type="journal article" date="1997" name="J. Bacteriol.">
        <title>Cloning and characterization of the ponA gene encoding penicillin-binding protein 1 from Neisseria gonorrhoeae and Neisseria meningitidis.</title>
        <authorList>
            <person name="Ropp P.A."/>
            <person name="Nicholas R.A."/>
        </authorList>
    </citation>
    <scope>NUCLEOTIDE SEQUENCE [GENOMIC DNA]</scope>
    <source>
        <strain>FA19</strain>
    </source>
</reference>